<comment type="catalytic activity">
    <reaction evidence="1">
        <text>(6S)-5,6,7,8-tetrahydrofolate + formate + ATP = (6R)-10-formyltetrahydrofolate + ADP + phosphate</text>
        <dbReference type="Rhea" id="RHEA:20221"/>
        <dbReference type="ChEBI" id="CHEBI:15740"/>
        <dbReference type="ChEBI" id="CHEBI:30616"/>
        <dbReference type="ChEBI" id="CHEBI:43474"/>
        <dbReference type="ChEBI" id="CHEBI:57453"/>
        <dbReference type="ChEBI" id="CHEBI:195366"/>
        <dbReference type="ChEBI" id="CHEBI:456216"/>
        <dbReference type="EC" id="6.3.4.3"/>
    </reaction>
</comment>
<comment type="pathway">
    <text evidence="1">One-carbon metabolism; tetrahydrofolate interconversion.</text>
</comment>
<comment type="similarity">
    <text evidence="1">Belongs to the formate--tetrahydrofolate ligase family.</text>
</comment>
<gene>
    <name evidence="1" type="primary">fhs</name>
    <name type="ordered locus">Arth_2901</name>
</gene>
<keyword id="KW-0067">ATP-binding</keyword>
<keyword id="KW-0436">Ligase</keyword>
<keyword id="KW-0547">Nucleotide-binding</keyword>
<keyword id="KW-0554">One-carbon metabolism</keyword>
<keyword id="KW-1185">Reference proteome</keyword>
<evidence type="ECO:0000255" key="1">
    <source>
        <dbReference type="HAMAP-Rule" id="MF_01543"/>
    </source>
</evidence>
<reference key="1">
    <citation type="journal article" date="2013" name="Stand. Genomic Sci.">
        <title>Complete genome sequence of Arthrobacter sp. strain FB24.</title>
        <authorList>
            <person name="Nakatsu C.H."/>
            <person name="Barabote R."/>
            <person name="Thompson S."/>
            <person name="Bruce D."/>
            <person name="Detter C."/>
            <person name="Brettin T."/>
            <person name="Han C."/>
            <person name="Beasley F."/>
            <person name="Chen W."/>
            <person name="Konopka A."/>
            <person name="Xie G."/>
        </authorList>
    </citation>
    <scope>NUCLEOTIDE SEQUENCE [LARGE SCALE GENOMIC DNA]</scope>
    <source>
        <strain>FB24</strain>
    </source>
</reference>
<feature type="chain" id="PRO_0000293032" description="Formate--tetrahydrofolate ligase">
    <location>
        <begin position="1"/>
        <end position="565"/>
    </location>
</feature>
<feature type="binding site" evidence="1">
    <location>
        <begin position="73"/>
        <end position="80"/>
    </location>
    <ligand>
        <name>ATP</name>
        <dbReference type="ChEBI" id="CHEBI:30616"/>
    </ligand>
</feature>
<name>FTHS_ARTS2</name>
<protein>
    <recommendedName>
        <fullName evidence="1">Formate--tetrahydrofolate ligase</fullName>
        <ecNumber evidence="1">6.3.4.3</ecNumber>
    </recommendedName>
    <alternativeName>
        <fullName evidence="1">Formyltetrahydrofolate synthetase</fullName>
        <shortName evidence="1">FHS</shortName>
        <shortName evidence="1">FTHFS</shortName>
    </alternativeName>
</protein>
<dbReference type="EC" id="6.3.4.3" evidence="1"/>
<dbReference type="EMBL" id="CP000454">
    <property type="protein sequence ID" value="ABK04280.1"/>
    <property type="molecule type" value="Genomic_DNA"/>
</dbReference>
<dbReference type="RefSeq" id="WP_011692739.1">
    <property type="nucleotide sequence ID" value="NC_008541.1"/>
</dbReference>
<dbReference type="SMR" id="A0JZ10"/>
<dbReference type="STRING" id="290399.Arth_2901"/>
<dbReference type="KEGG" id="art:Arth_2901"/>
<dbReference type="eggNOG" id="COG2759">
    <property type="taxonomic scope" value="Bacteria"/>
</dbReference>
<dbReference type="HOGENOM" id="CLU_003601_3_3_11"/>
<dbReference type="OrthoDB" id="9761733at2"/>
<dbReference type="UniPathway" id="UPA00193"/>
<dbReference type="Proteomes" id="UP000000754">
    <property type="component" value="Chromosome"/>
</dbReference>
<dbReference type="GO" id="GO:0005524">
    <property type="term" value="F:ATP binding"/>
    <property type="evidence" value="ECO:0007669"/>
    <property type="project" value="UniProtKB-UniRule"/>
</dbReference>
<dbReference type="GO" id="GO:0004329">
    <property type="term" value="F:formate-tetrahydrofolate ligase activity"/>
    <property type="evidence" value="ECO:0007669"/>
    <property type="project" value="UniProtKB-UniRule"/>
</dbReference>
<dbReference type="GO" id="GO:0035999">
    <property type="term" value="P:tetrahydrofolate interconversion"/>
    <property type="evidence" value="ECO:0007669"/>
    <property type="project" value="UniProtKB-UniRule"/>
</dbReference>
<dbReference type="CDD" id="cd00477">
    <property type="entry name" value="FTHFS"/>
    <property type="match status" value="1"/>
</dbReference>
<dbReference type="FunFam" id="3.30.1510.10:FF:000001">
    <property type="entry name" value="Formate--tetrahydrofolate ligase"/>
    <property type="match status" value="1"/>
</dbReference>
<dbReference type="FunFam" id="3.10.410.10:FF:000001">
    <property type="entry name" value="Putative formate--tetrahydrofolate ligase"/>
    <property type="match status" value="1"/>
</dbReference>
<dbReference type="Gene3D" id="3.30.1510.10">
    <property type="entry name" value="Domain 2, N(10)-formyltetrahydrofolate synthetase"/>
    <property type="match status" value="1"/>
</dbReference>
<dbReference type="Gene3D" id="3.10.410.10">
    <property type="entry name" value="Formyltetrahydrofolate synthetase, domain 3"/>
    <property type="match status" value="1"/>
</dbReference>
<dbReference type="Gene3D" id="3.40.50.300">
    <property type="entry name" value="P-loop containing nucleotide triphosphate hydrolases"/>
    <property type="match status" value="1"/>
</dbReference>
<dbReference type="HAMAP" id="MF_01543">
    <property type="entry name" value="FTHFS"/>
    <property type="match status" value="1"/>
</dbReference>
<dbReference type="InterPro" id="IPR000559">
    <property type="entry name" value="Formate_THF_ligase"/>
</dbReference>
<dbReference type="InterPro" id="IPR020628">
    <property type="entry name" value="Formate_THF_ligase_CS"/>
</dbReference>
<dbReference type="InterPro" id="IPR027417">
    <property type="entry name" value="P-loop_NTPase"/>
</dbReference>
<dbReference type="NCBIfam" id="NF010030">
    <property type="entry name" value="PRK13505.1"/>
    <property type="match status" value="1"/>
</dbReference>
<dbReference type="Pfam" id="PF01268">
    <property type="entry name" value="FTHFS"/>
    <property type="match status" value="1"/>
</dbReference>
<dbReference type="SUPFAM" id="SSF52540">
    <property type="entry name" value="P-loop containing nucleoside triphosphate hydrolases"/>
    <property type="match status" value="1"/>
</dbReference>
<dbReference type="PROSITE" id="PS00721">
    <property type="entry name" value="FTHFS_1"/>
    <property type="match status" value="1"/>
</dbReference>
<dbReference type="PROSITE" id="PS00722">
    <property type="entry name" value="FTHFS_2"/>
    <property type="match status" value="1"/>
</dbReference>
<proteinExistence type="inferred from homology"/>
<sequence length="565" mass="59652">MSDNNVMSDLEIAQRATMRPIGDIAAAAGINADAVELYGRYKAKIDPAKLIDPAGAPKRLPGKVVLVSAMSPTPAGEGKSTTTVGLADSLARAGRNVMIALREPSLGPVLGMKGGATGGGYSQVLPMEEINLHFTGDFHAITSANNALMALVDNHIFQGNELNIDPRRMTFKRVLDMNDRSLREVIIGLGGPAQGVPRQDGFDITVASEIMAVFCLATDIADLRARLGRITFGYTYDREPVTVADLGVQGALTMLLRDAIKPNLVQTIAGTPALVHGGPFANIAHGCNSLIATQTARRLADIVVTEAGFGADLGAEKFMDIKARVAGVAPSAVVLVATVRALKMHGGVAKDRLQEPNVEALAAGSANLRRHIRNVEKFGITPVVAVNKFATDTPEELDWLLEWCAGEGVQAAVADVWGRGGGGDGGDELAAKVLAALEAPHSFRHLYPLELSVEDKIRTIVQEMYGADGVDFSVPALKRLAEIEKNGWAGMPVCMAKTQYSFSDDATRLGAPKGFTVHVRDLIPKTGAGFIVALTGAVMTMPGLPKVPAALRMDVDDTGKPLGLF</sequence>
<accession>A0JZ10</accession>
<organism>
    <name type="scientific">Arthrobacter sp. (strain FB24)</name>
    <dbReference type="NCBI Taxonomy" id="290399"/>
    <lineage>
        <taxon>Bacteria</taxon>
        <taxon>Bacillati</taxon>
        <taxon>Actinomycetota</taxon>
        <taxon>Actinomycetes</taxon>
        <taxon>Micrococcales</taxon>
        <taxon>Micrococcaceae</taxon>
        <taxon>Arthrobacter</taxon>
    </lineage>
</organism>